<accession>P93299</accession>
<accession>P92546</accession>
<evidence type="ECO:0000305" key="1"/>
<evidence type="ECO:0000312" key="2">
    <source>
        <dbReference type="Araport" id="AT2G07701"/>
    </source>
</evidence>
<evidence type="ECO:0000312" key="3">
    <source>
        <dbReference type="Araport" id="ATMG00430"/>
    </source>
</evidence>
<evidence type="ECO:0000312" key="4">
    <source>
        <dbReference type="Araport" id="ATMG01150"/>
    </source>
</evidence>
<reference key="1">
    <citation type="journal article" date="1997" name="Nat. Genet.">
        <title>The mitochondrial genome of Arabidopsis thaliana contains 57 genes in 366,924 nucleotides.</title>
        <authorList>
            <person name="Unseld M."/>
            <person name="Marienfeld J.R."/>
            <person name="Brandt P."/>
            <person name="Brennicke A."/>
        </authorList>
    </citation>
    <scope>NUCLEOTIDE SEQUENCE [LARGE SCALE GENOMIC DNA]</scope>
    <source>
        <strain>cv. C24</strain>
    </source>
</reference>
<reference key="2">
    <citation type="journal article" date="2018" name="Plant Cell">
        <title>Correction of persistent errors in Arabidopsis reference mitochondrial genomes.</title>
        <authorList>
            <person name="Sloan D.B."/>
            <person name="Wu Z."/>
            <person name="Sharbrough J."/>
        </authorList>
    </citation>
    <scope>NUCLEOTIDE SEQUENCE [LARGE SCALE GENOMIC DNA]</scope>
    <source>
        <strain>cv. Columbia</strain>
    </source>
</reference>
<reference key="3">
    <citation type="journal article" date="1999" name="Nature">
        <title>Sequence and analysis of chromosome 2 of the plant Arabidopsis thaliana.</title>
        <authorList>
            <person name="Lin X."/>
            <person name="Kaul S."/>
            <person name="Rounsley S.D."/>
            <person name="Shea T.P."/>
            <person name="Benito M.-I."/>
            <person name="Town C.D."/>
            <person name="Fujii C.Y."/>
            <person name="Mason T.M."/>
            <person name="Bowman C.L."/>
            <person name="Barnstead M.E."/>
            <person name="Feldblyum T.V."/>
            <person name="Buell C.R."/>
            <person name="Ketchum K.A."/>
            <person name="Lee J.J."/>
            <person name="Ronning C.M."/>
            <person name="Koo H.L."/>
            <person name="Moffat K.S."/>
            <person name="Cronin L.A."/>
            <person name="Shen M."/>
            <person name="Pai G."/>
            <person name="Van Aken S."/>
            <person name="Umayam L."/>
            <person name="Tallon L.J."/>
            <person name="Gill J.E."/>
            <person name="Adams M.D."/>
            <person name="Carrera A.J."/>
            <person name="Creasy T.H."/>
            <person name="Goodman H.M."/>
            <person name="Somerville C.R."/>
            <person name="Copenhaver G.P."/>
            <person name="Preuss D."/>
            <person name="Nierman W.C."/>
            <person name="White O."/>
            <person name="Eisen J.A."/>
            <person name="Salzberg S.L."/>
            <person name="Fraser C.M."/>
            <person name="Venter J.C."/>
        </authorList>
    </citation>
    <scope>NUCLEOTIDE SEQUENCE [LARGE SCALE GENOMIC DNA] (AT2G07701)</scope>
    <source>
        <strain>cv. Columbia</strain>
    </source>
</reference>
<reference key="4">
    <citation type="journal article" date="2017" name="Plant J.">
        <title>Araport11: a complete reannotation of the Arabidopsis thaliana reference genome.</title>
        <authorList>
            <person name="Cheng C.Y."/>
            <person name="Krishnakumar V."/>
            <person name="Chan A.P."/>
            <person name="Thibaud-Nissen F."/>
            <person name="Schobel S."/>
            <person name="Town C.D."/>
        </authorList>
    </citation>
    <scope>GENOME REANNOTATION (AT2G07701)</scope>
    <source>
        <strain>cv. Columbia</strain>
    </source>
</reference>
<dbReference type="EMBL" id="Y08501">
    <property type="protein sequence ID" value="CAA69728.1"/>
    <property type="molecule type" value="Genomic_DNA"/>
</dbReference>
<dbReference type="EMBL" id="Y08501">
    <property type="protein sequence ID" value="CAA69799.1"/>
    <property type="molecule type" value="Genomic_DNA"/>
</dbReference>
<dbReference type="EMBL" id="BK010421">
    <property type="status" value="NOT_ANNOTATED_CDS"/>
    <property type="molecule type" value="Genomic_DNA"/>
</dbReference>
<dbReference type="EMBL" id="AC007729">
    <property type="protein sequence ID" value="AAM15500.1"/>
    <property type="molecule type" value="Genomic_DNA"/>
</dbReference>
<dbReference type="EMBL" id="CP002685">
    <property type="protein sequence ID" value="AEC06091.1"/>
    <property type="molecule type" value="Genomic_DNA"/>
</dbReference>
<dbReference type="RefSeq" id="NP_085504.1">
    <property type="nucleotide sequence ID" value="NC_001284.2"/>
</dbReference>
<dbReference type="RefSeq" id="NP_085568.1">
    <property type="nucleotide sequence ID" value="NC_001284.2"/>
</dbReference>
<dbReference type="RefSeq" id="NP_178789.1">
    <property type="nucleotide sequence ID" value="NM_126748.1"/>
</dbReference>
<dbReference type="STRING" id="3702.P93299"/>
<dbReference type="PaxDb" id="3702-AT2G07701.1"/>
<dbReference type="EnsemblPlants" id="AT2G07701.1">
    <property type="protein sequence ID" value="AT2G07701.1"/>
    <property type="gene ID" value="AT2G07701"/>
</dbReference>
<dbReference type="EnsemblPlants" id="ATMG00430.1">
    <property type="protein sequence ID" value="ATMG00430.1"/>
    <property type="gene ID" value="ATMG00430"/>
</dbReference>
<dbReference type="EnsemblPlants" id="ATMG01150.1">
    <property type="protein sequence ID" value="ATMG01150.1"/>
    <property type="gene ID" value="ATMG01150"/>
</dbReference>
<dbReference type="GeneID" id="815376"/>
<dbReference type="Gramene" id="AT2G07701.1">
    <property type="protein sequence ID" value="AT2G07701.1"/>
    <property type="gene ID" value="AT2G07701"/>
</dbReference>
<dbReference type="Gramene" id="ATMG00430.1">
    <property type="protein sequence ID" value="ATMG00430.1"/>
    <property type="gene ID" value="ATMG00430"/>
</dbReference>
<dbReference type="Gramene" id="ATMG01150.1">
    <property type="protein sequence ID" value="ATMG01150.1"/>
    <property type="gene ID" value="ATMG01150"/>
</dbReference>
<dbReference type="KEGG" id="ath:AT2G07701"/>
<dbReference type="Araport" id="AT2G07701"/>
<dbReference type="Araport" id="ATMG00430"/>
<dbReference type="Araport" id="ATMG01150"/>
<dbReference type="TAIR" id="AT2G07701"/>
<dbReference type="TAIR" id="ATMG00430">
    <property type="gene designation" value="ORF106A"/>
</dbReference>
<dbReference type="TAIR" id="ATMG01150">
    <property type="gene designation" value="ORF106G"/>
</dbReference>
<dbReference type="HOGENOM" id="CLU_2226857_0_0_1"/>
<dbReference type="InParanoid" id="P93299"/>
<dbReference type="OrthoDB" id="1117816at2759"/>
<dbReference type="PRO" id="PR:P93299"/>
<dbReference type="Proteomes" id="UP000006548">
    <property type="component" value="Chromosome 2"/>
</dbReference>
<dbReference type="Proteomes" id="UP000006548">
    <property type="component" value="Mitochondrion MT"/>
</dbReference>
<dbReference type="GO" id="GO:0005739">
    <property type="term" value="C:mitochondrion"/>
    <property type="evidence" value="ECO:0007669"/>
    <property type="project" value="UniProtKB-SubCell"/>
</dbReference>
<keyword id="KW-0496">Mitochondrion</keyword>
<keyword id="KW-1185">Reference proteome</keyword>
<gene>
    <name evidence="3" type="ordered locus">AtMg00430</name>
</gene>
<gene>
    <name evidence="4" type="ordered locus">AtMg01150</name>
</gene>
<gene>
    <name evidence="2" type="ordered locus">At2g07701</name>
</gene>
<proteinExistence type="predicted"/>
<sequence>MLHRGRSCLTGLFPCYLLSNWLNSNLCWIPLKLVIPCFQLIVESYLLEFLLLLAISTCLLGEDSLIWLTLVVAHSKSRQSSSQEPLDTRMATRALLDQLRSDRRHN</sequence>
<name>M430_ARATH</name>
<comment type="subcellular location">
    <subcellularLocation>
        <location evidence="1">Mitochondrion</location>
    </subcellularLocation>
</comment>
<comment type="miscellaneous">
    <text>A stretch of 270 kb of the mitochondrial genome is duplicated within the centromere of chromosome 2 resulting in the duplication of the gene. The expression of this duplicated gene (At2g07701) is not demonstrated.</text>
</comment>
<organism>
    <name type="scientific">Arabidopsis thaliana</name>
    <name type="common">Mouse-ear cress</name>
    <dbReference type="NCBI Taxonomy" id="3702"/>
    <lineage>
        <taxon>Eukaryota</taxon>
        <taxon>Viridiplantae</taxon>
        <taxon>Streptophyta</taxon>
        <taxon>Embryophyta</taxon>
        <taxon>Tracheophyta</taxon>
        <taxon>Spermatophyta</taxon>
        <taxon>Magnoliopsida</taxon>
        <taxon>eudicotyledons</taxon>
        <taxon>Gunneridae</taxon>
        <taxon>Pentapetalae</taxon>
        <taxon>rosids</taxon>
        <taxon>malvids</taxon>
        <taxon>Brassicales</taxon>
        <taxon>Brassicaceae</taxon>
        <taxon>Camelineae</taxon>
        <taxon>Arabidopsis</taxon>
    </lineage>
</organism>
<feature type="chain" id="PRO_0000196769" description="Uncharacterized mitochondrial protein AtMg00430/AtMg01150">
    <location>
        <begin position="1"/>
        <end position="106"/>
    </location>
</feature>
<protein>
    <recommendedName>
        <fullName>Uncharacterized mitochondrial protein AtMg00430/AtMg01150</fullName>
    </recommendedName>
    <alternativeName>
        <fullName>ORF106a/ORF106g</fullName>
    </alternativeName>
</protein>
<geneLocation type="mitochondrion"/>